<comment type="function">
    <text>Antenna complexes are light-harvesting systems, which transfer the excitation energy to the reaction centers.</text>
</comment>
<comment type="subunit">
    <text>The core complex is formed by different alpha and beta chains, binding bacteriochlorophyll molecules, and arranged most probably in tetrameric structures disposed around the reaction center. The non-pigmented gamma chains may constitute additional components.</text>
</comment>
<comment type="subcellular location">
    <subcellularLocation>
        <location>Cell inner membrane</location>
        <topology>Single-pass type II membrane protein</topology>
    </subcellularLocation>
</comment>
<comment type="similarity">
    <text evidence="2">Belongs to the antenna complex beta subunit family.</text>
</comment>
<keyword id="KW-0042">Antenna complex</keyword>
<keyword id="KW-0076">Bacteriochlorophyll</keyword>
<keyword id="KW-0997">Cell inner membrane</keyword>
<keyword id="KW-1003">Cell membrane</keyword>
<keyword id="KW-0148">Chlorophyll</keyword>
<keyword id="KW-0157">Chromophore</keyword>
<keyword id="KW-0903">Direct protein sequencing</keyword>
<keyword id="KW-0437">Light-harvesting polypeptide</keyword>
<keyword id="KW-0460">Magnesium</keyword>
<keyword id="KW-0472">Membrane</keyword>
<keyword id="KW-0479">Metal-binding</keyword>
<keyword id="KW-0812">Transmembrane</keyword>
<keyword id="KW-1133">Transmembrane helix</keyword>
<evidence type="ECO:0000255" key="1"/>
<evidence type="ECO:0000305" key="2"/>
<organism>
    <name type="scientific">Halorhodospira halophila (strain DSM 244 / SL1)</name>
    <name type="common">Ectothiorhodospira halophila (strain DSM 244 / SL1)</name>
    <dbReference type="NCBI Taxonomy" id="349124"/>
    <lineage>
        <taxon>Bacteria</taxon>
        <taxon>Pseudomonadati</taxon>
        <taxon>Pseudomonadota</taxon>
        <taxon>Gammaproteobacteria</taxon>
        <taxon>Chromatiales</taxon>
        <taxon>Ectothiorhodospiraceae</taxon>
        <taxon>Halorhodospira</taxon>
    </lineage>
</organism>
<reference key="1">
    <citation type="journal article" date="1992" name="Eur. J. Biochem.">
        <title>The primary structure of the antenna polypeptides of Ectothiorhodospira halochloris and Ectothiorhodospira halophila. Four core-type antenna polypeptides in E. halochloris and E. halophila.</title>
        <authorList>
            <person name="Wagner-Huber R."/>
            <person name="Brunisholz R.A."/>
            <person name="Bissig I."/>
            <person name="Frank G."/>
            <person name="Suter F."/>
            <person name="Zuber H."/>
        </authorList>
    </citation>
    <scope>PROTEIN SEQUENCE</scope>
</reference>
<feature type="chain" id="PRO_0000099811" description="Light-harvesting protein B800/850/890 beta-2 chain">
    <location>
        <begin position="1"/>
        <end position="51" status="greater than"/>
    </location>
</feature>
<feature type="topological domain" description="Cytoplasmic" evidence="1">
    <location>
        <begin position="1"/>
        <end position="17"/>
    </location>
</feature>
<feature type="transmembrane region" description="Helical" evidence="1">
    <location>
        <begin position="18"/>
        <end position="40"/>
    </location>
</feature>
<feature type="topological domain" description="Periplasmic" evidence="1">
    <location>
        <begin position="41"/>
        <end position="51" status="greater than"/>
    </location>
</feature>
<feature type="binding site" description="axial binding residue" evidence="1">
    <location>
        <position position="16"/>
    </location>
    <ligand>
        <name>a bacteriochlorophyll</name>
        <dbReference type="ChEBI" id="CHEBI:38201"/>
    </ligand>
    <ligandPart>
        <name>Mg</name>
        <dbReference type="ChEBI" id="CHEBI:25107"/>
    </ligandPart>
</feature>
<feature type="binding site" description="axial binding residue" evidence="1">
    <location>
        <position position="34"/>
    </location>
    <ligand>
        <name>a bacteriochlorophyll</name>
        <dbReference type="ChEBI" id="CHEBI:38201"/>
    </ligand>
    <ligandPart>
        <name>Mg</name>
        <dbReference type="ChEBI" id="CHEBI:25107"/>
    </ligandPart>
</feature>
<feature type="non-terminal residue">
    <location>
        <position position="51"/>
    </location>
</feature>
<sequence>ADEMRNVSDEEAKEFHAMFSQAFTVYVGVAVVAHILAWAWRPWIPGDEGFG</sequence>
<accession>P80105</accession>
<dbReference type="PIR" id="S23291">
    <property type="entry name" value="S23291"/>
</dbReference>
<dbReference type="SMR" id="P80105"/>
<dbReference type="STRING" id="349124.Hhal_1607"/>
<dbReference type="GO" id="GO:0005886">
    <property type="term" value="C:plasma membrane"/>
    <property type="evidence" value="ECO:0007669"/>
    <property type="project" value="UniProtKB-SubCell"/>
</dbReference>
<dbReference type="GO" id="GO:0030077">
    <property type="term" value="C:plasma membrane light-harvesting complex"/>
    <property type="evidence" value="ECO:0007669"/>
    <property type="project" value="InterPro"/>
</dbReference>
<dbReference type="GO" id="GO:0042314">
    <property type="term" value="F:bacteriochlorophyll binding"/>
    <property type="evidence" value="ECO:0007669"/>
    <property type="project" value="UniProtKB-KW"/>
</dbReference>
<dbReference type="GO" id="GO:0045156">
    <property type="term" value="F:electron transporter, transferring electrons within the cyclic electron transport pathway of photosynthesis activity"/>
    <property type="evidence" value="ECO:0007669"/>
    <property type="project" value="InterPro"/>
</dbReference>
<dbReference type="GO" id="GO:0046872">
    <property type="term" value="F:metal ion binding"/>
    <property type="evidence" value="ECO:0007669"/>
    <property type="project" value="UniProtKB-KW"/>
</dbReference>
<dbReference type="GO" id="GO:0019684">
    <property type="term" value="P:photosynthesis, light reaction"/>
    <property type="evidence" value="ECO:0007669"/>
    <property type="project" value="InterPro"/>
</dbReference>
<dbReference type="Gene3D" id="1.20.5.250">
    <property type="match status" value="1"/>
</dbReference>
<dbReference type="InterPro" id="IPR000066">
    <property type="entry name" value="Antenna_a/b"/>
</dbReference>
<dbReference type="InterPro" id="IPR023623">
    <property type="entry name" value="Antenna_beta_CS"/>
</dbReference>
<dbReference type="InterPro" id="IPR023624">
    <property type="entry name" value="Antenna_beta_dom_sf"/>
</dbReference>
<dbReference type="InterPro" id="IPR002362">
    <property type="entry name" value="LHB-1/5"/>
</dbReference>
<dbReference type="InterPro" id="IPR035889">
    <property type="entry name" value="Light-harvesting_complex"/>
</dbReference>
<dbReference type="NCBIfam" id="NF040862">
    <property type="entry name" value="pufB_517_ASD"/>
    <property type="match status" value="1"/>
</dbReference>
<dbReference type="Pfam" id="PF00556">
    <property type="entry name" value="LHC"/>
    <property type="match status" value="1"/>
</dbReference>
<dbReference type="PIRSF" id="PIRSF002900">
    <property type="entry name" value="Antenna_beta"/>
    <property type="match status" value="1"/>
</dbReference>
<dbReference type="PRINTS" id="PR00674">
    <property type="entry name" value="LIGHTHARVSTB"/>
</dbReference>
<dbReference type="SUPFAM" id="SSF56918">
    <property type="entry name" value="Light-harvesting complex subunits"/>
    <property type="match status" value="1"/>
</dbReference>
<dbReference type="PROSITE" id="PS00969">
    <property type="entry name" value="ANTENNA_COMP_BETA"/>
    <property type="match status" value="1"/>
</dbReference>
<protein>
    <recommendedName>
        <fullName>Light-harvesting protein B800/850/890 beta-2 chain</fullName>
    </recommendedName>
    <alternativeName>
        <fullName>Antenna pigment protein beta-2 chain</fullName>
    </alternativeName>
    <alternativeName>
        <fullName>EHA-beta-2</fullName>
    </alternativeName>
</protein>
<proteinExistence type="evidence at protein level"/>
<name>LHB2_HALHL</name>